<organism>
    <name type="scientific">Thermotoga maritima (strain ATCC 43589 / DSM 3109 / JCM 10099 / NBRC 100826 / MSB8)</name>
    <dbReference type="NCBI Taxonomy" id="243274"/>
    <lineage>
        <taxon>Bacteria</taxon>
        <taxon>Thermotogati</taxon>
        <taxon>Thermotogota</taxon>
        <taxon>Thermotogae</taxon>
        <taxon>Thermotogales</taxon>
        <taxon>Thermotogaceae</taxon>
        <taxon>Thermotoga</taxon>
    </lineage>
</organism>
<protein>
    <recommendedName>
        <fullName>tRNA (guanine-N(1)-)-methyltransferase</fullName>
        <ecNumber>2.1.1.228</ecNumber>
    </recommendedName>
    <alternativeName>
        <fullName>M1G-methyltransferase</fullName>
    </alternativeName>
    <alternativeName>
        <fullName>tRNA [GM37] methyltransferase</fullName>
    </alternativeName>
</protein>
<comment type="function">
    <text evidence="1">Specifically methylates guanosine-37 in various tRNAs.</text>
</comment>
<comment type="catalytic activity">
    <reaction>
        <text>guanosine(37) in tRNA + S-adenosyl-L-methionine = N(1)-methylguanosine(37) in tRNA + S-adenosyl-L-homocysteine + H(+)</text>
        <dbReference type="Rhea" id="RHEA:36899"/>
        <dbReference type="Rhea" id="RHEA-COMP:10145"/>
        <dbReference type="Rhea" id="RHEA-COMP:10147"/>
        <dbReference type="ChEBI" id="CHEBI:15378"/>
        <dbReference type="ChEBI" id="CHEBI:57856"/>
        <dbReference type="ChEBI" id="CHEBI:59789"/>
        <dbReference type="ChEBI" id="CHEBI:73542"/>
        <dbReference type="ChEBI" id="CHEBI:74269"/>
        <dbReference type="EC" id="2.1.1.228"/>
    </reaction>
</comment>
<comment type="subunit">
    <text evidence="1">Homodimer.</text>
</comment>
<comment type="subcellular location">
    <subcellularLocation>
        <location evidence="2">Cytoplasm</location>
    </subcellularLocation>
</comment>
<comment type="similarity">
    <text evidence="2">Belongs to the RNA methyltransferase TrmD family.</text>
</comment>
<keyword id="KW-0963">Cytoplasm</keyword>
<keyword id="KW-0489">Methyltransferase</keyword>
<keyword id="KW-1185">Reference proteome</keyword>
<keyword id="KW-0949">S-adenosyl-L-methionine</keyword>
<keyword id="KW-0808">Transferase</keyword>
<keyword id="KW-0819">tRNA processing</keyword>
<reference key="1">
    <citation type="journal article" date="1999" name="Nature">
        <title>Evidence for lateral gene transfer between Archaea and Bacteria from genome sequence of Thermotoga maritima.</title>
        <authorList>
            <person name="Nelson K.E."/>
            <person name="Clayton R.A."/>
            <person name="Gill S.R."/>
            <person name="Gwinn M.L."/>
            <person name="Dodson R.J."/>
            <person name="Haft D.H."/>
            <person name="Hickey E.K."/>
            <person name="Peterson J.D."/>
            <person name="Nelson W.C."/>
            <person name="Ketchum K.A."/>
            <person name="McDonald L.A."/>
            <person name="Utterback T.R."/>
            <person name="Malek J.A."/>
            <person name="Linher K.D."/>
            <person name="Garrett M.M."/>
            <person name="Stewart A.M."/>
            <person name="Cotton M.D."/>
            <person name="Pratt M.S."/>
            <person name="Phillips C.A."/>
            <person name="Richardson D.L."/>
            <person name="Heidelberg J.F."/>
            <person name="Sutton G.G."/>
            <person name="Fleischmann R.D."/>
            <person name="Eisen J.A."/>
            <person name="White O."/>
            <person name="Salzberg S.L."/>
            <person name="Smith H.O."/>
            <person name="Venter J.C."/>
            <person name="Fraser C.M."/>
        </authorList>
    </citation>
    <scope>NUCLEOTIDE SEQUENCE [LARGE SCALE GENOMIC DNA]</scope>
    <source>
        <strain>ATCC 43589 / DSM 3109 / JCM 10099 / NBRC 100826 / MSB8</strain>
    </source>
</reference>
<name>TRMD_THEMA</name>
<proteinExistence type="inferred from homology"/>
<dbReference type="EC" id="2.1.1.228"/>
<dbReference type="EMBL" id="AE000512">
    <property type="protein sequence ID" value="AAD36636.1"/>
    <property type="molecule type" value="Genomic_DNA"/>
</dbReference>
<dbReference type="PIR" id="B72237">
    <property type="entry name" value="B72237"/>
</dbReference>
<dbReference type="RefSeq" id="NP_229369.1">
    <property type="nucleotide sequence ID" value="NC_000853.1"/>
</dbReference>
<dbReference type="RefSeq" id="WP_004081985.1">
    <property type="nucleotide sequence ID" value="NZ_CP011107.1"/>
</dbReference>
<dbReference type="SMR" id="Q9X1Q5"/>
<dbReference type="FunCoup" id="Q9X1Q5">
    <property type="interactions" value="345"/>
</dbReference>
<dbReference type="STRING" id="243274.TM_1569"/>
<dbReference type="PaxDb" id="243274-THEMA_06435"/>
<dbReference type="EnsemblBacteria" id="AAD36636">
    <property type="protein sequence ID" value="AAD36636"/>
    <property type="gene ID" value="TM_1569"/>
</dbReference>
<dbReference type="KEGG" id="tma:TM1569"/>
<dbReference type="KEGG" id="tmi:THEMA_06435"/>
<dbReference type="KEGG" id="tmw:THMA_1604"/>
<dbReference type="PATRIC" id="fig|243274.18.peg.1241"/>
<dbReference type="eggNOG" id="COG0336">
    <property type="taxonomic scope" value="Bacteria"/>
</dbReference>
<dbReference type="InParanoid" id="Q9X1Q5"/>
<dbReference type="OrthoDB" id="9807416at2"/>
<dbReference type="Proteomes" id="UP000008183">
    <property type="component" value="Chromosome"/>
</dbReference>
<dbReference type="GO" id="GO:0005829">
    <property type="term" value="C:cytosol"/>
    <property type="evidence" value="ECO:0000318"/>
    <property type="project" value="GO_Central"/>
</dbReference>
<dbReference type="GO" id="GO:0052906">
    <property type="term" value="F:tRNA (guanine(37)-N1)-methyltransferase activity"/>
    <property type="evidence" value="ECO:0000318"/>
    <property type="project" value="GO_Central"/>
</dbReference>
<dbReference type="GO" id="GO:0002939">
    <property type="term" value="P:tRNA N1-guanine methylation"/>
    <property type="evidence" value="ECO:0000318"/>
    <property type="project" value="GO_Central"/>
</dbReference>
<dbReference type="CDD" id="cd18080">
    <property type="entry name" value="TrmD-like"/>
    <property type="match status" value="1"/>
</dbReference>
<dbReference type="FunFam" id="1.10.1270.20:FF:000001">
    <property type="entry name" value="tRNA (guanine-N(1)-)-methyltransferase"/>
    <property type="match status" value="1"/>
</dbReference>
<dbReference type="FunFam" id="3.40.1280.10:FF:000001">
    <property type="entry name" value="tRNA (guanine-N(1)-)-methyltransferase"/>
    <property type="match status" value="1"/>
</dbReference>
<dbReference type="Gene3D" id="3.40.1280.10">
    <property type="match status" value="1"/>
</dbReference>
<dbReference type="Gene3D" id="1.10.1270.20">
    <property type="entry name" value="tRNA(m1g37)methyltransferase, domain 2"/>
    <property type="match status" value="1"/>
</dbReference>
<dbReference type="HAMAP" id="MF_00605">
    <property type="entry name" value="TrmD"/>
    <property type="match status" value="1"/>
</dbReference>
<dbReference type="InterPro" id="IPR029028">
    <property type="entry name" value="Alpha/beta_knot_MTases"/>
</dbReference>
<dbReference type="InterPro" id="IPR023148">
    <property type="entry name" value="tRNA_m1G_MeTrfase_C_sf"/>
</dbReference>
<dbReference type="InterPro" id="IPR002649">
    <property type="entry name" value="tRNA_m1G_MeTrfase_TrmD"/>
</dbReference>
<dbReference type="InterPro" id="IPR029026">
    <property type="entry name" value="tRNA_m1G_MTases_N"/>
</dbReference>
<dbReference type="InterPro" id="IPR016009">
    <property type="entry name" value="tRNA_MeTrfase_TRMD/TRM10"/>
</dbReference>
<dbReference type="NCBIfam" id="NF000648">
    <property type="entry name" value="PRK00026.1"/>
    <property type="match status" value="1"/>
</dbReference>
<dbReference type="NCBIfam" id="TIGR00088">
    <property type="entry name" value="trmD"/>
    <property type="match status" value="1"/>
</dbReference>
<dbReference type="PANTHER" id="PTHR46417">
    <property type="entry name" value="TRNA (GUANINE-N(1)-)-METHYLTRANSFERASE"/>
    <property type="match status" value="1"/>
</dbReference>
<dbReference type="PANTHER" id="PTHR46417:SF1">
    <property type="entry name" value="TRNA (GUANINE-N(1)-)-METHYLTRANSFERASE"/>
    <property type="match status" value="1"/>
</dbReference>
<dbReference type="Pfam" id="PF01746">
    <property type="entry name" value="tRNA_m1G_MT"/>
    <property type="match status" value="1"/>
</dbReference>
<dbReference type="PIRSF" id="PIRSF000386">
    <property type="entry name" value="tRNA_mtase"/>
    <property type="match status" value="1"/>
</dbReference>
<dbReference type="SUPFAM" id="SSF75217">
    <property type="entry name" value="alpha/beta knot"/>
    <property type="match status" value="1"/>
</dbReference>
<sequence>MRITIVTIFPEMVEVIKKYGVIARAVERGIVEINVENLRDYTTDRHRTVDDYQYGGGYGMVMKPEPFFRFYESYVEKYGKPYVILTSPQGRIFNYKIAEELSKKDDIVIFCGRYEGIDERVMSIVDDEISIGDYILTGGELPAMVITDAVVRLVPGVVERESVERESFHQGLLDHPVYTRPYEYKGMKVPDVLLSGDHEKVELWRRKESIKKTLAKRPDLFLAKELDEMDKLAIIELFRELMEKC</sequence>
<gene>
    <name type="primary">trmD</name>
    <name type="ordered locus">TM_1569</name>
</gene>
<accession>Q9X1Q5</accession>
<feature type="chain" id="PRO_0000060484" description="tRNA (guanine-N(1)-)-methyltransferase">
    <location>
        <begin position="1"/>
        <end position="245"/>
    </location>
</feature>
<feature type="binding site" evidence="1">
    <location>
        <position position="112"/>
    </location>
    <ligand>
        <name>S-adenosyl-L-methionine</name>
        <dbReference type="ChEBI" id="CHEBI:59789"/>
    </ligand>
</feature>
<feature type="binding site" evidence="1">
    <location>
        <begin position="131"/>
        <end position="136"/>
    </location>
    <ligand>
        <name>S-adenosyl-L-methionine</name>
        <dbReference type="ChEBI" id="CHEBI:59789"/>
    </ligand>
</feature>
<evidence type="ECO:0000250" key="1"/>
<evidence type="ECO:0000305" key="2"/>